<evidence type="ECO:0000255" key="1">
    <source>
        <dbReference type="HAMAP-Rule" id="MF_00913"/>
    </source>
</evidence>
<sequence length="373" mass="41050">MNLGLNVKEIERYDLVILLMAVALTCFGVVMVYSASSVMATKKFHDGFYFLKRQGVYALLGFGVMAVAMRIDYRTWREYAVPILLGCLFLLFLVFIPGIGGAAKGASRWIRLPGFNFQPSELTKIALIVYMAYSLDKKQDKVKFFSTGFLPYMVLLSVVLLILLKQHDLGAALTMGLVAIIMLFAAGTRPRYIIAMGMMALPILYFLVMNVDYRRRRILAYLNPWEDPTDTGFQIIQSWLAFGNGGVLGQGLGEGKQKMFYLPEAHTDFILSVTGEELGLIGVTVIAAMFLMLVLRGVRVALMAQEPFGRFLAFGIATLLGIQSFVNMAVVTGLLPTKGLALPFISYGGSSLIVTLFAVGILLNISTRLKGAP</sequence>
<dbReference type="EC" id="2.4.99.28" evidence="1"/>
<dbReference type="EMBL" id="CP002031">
    <property type="protein sequence ID" value="ADI85821.1"/>
    <property type="molecule type" value="Genomic_DNA"/>
</dbReference>
<dbReference type="RefSeq" id="WP_010943695.1">
    <property type="nucleotide sequence ID" value="NC_017454.1"/>
</dbReference>
<dbReference type="SMR" id="D7AEL2"/>
<dbReference type="KEGG" id="gsk:KN400_3009"/>
<dbReference type="PATRIC" id="fig|663917.3.peg.3018"/>
<dbReference type="HOGENOM" id="CLU_029243_0_1_7"/>
<dbReference type="UniPathway" id="UPA00219"/>
<dbReference type="GO" id="GO:0032153">
    <property type="term" value="C:cell division site"/>
    <property type="evidence" value="ECO:0007669"/>
    <property type="project" value="TreeGrafter"/>
</dbReference>
<dbReference type="GO" id="GO:0005886">
    <property type="term" value="C:plasma membrane"/>
    <property type="evidence" value="ECO:0007669"/>
    <property type="project" value="UniProtKB-SubCell"/>
</dbReference>
<dbReference type="GO" id="GO:0015648">
    <property type="term" value="F:lipid-linked peptidoglycan transporter activity"/>
    <property type="evidence" value="ECO:0007669"/>
    <property type="project" value="TreeGrafter"/>
</dbReference>
<dbReference type="GO" id="GO:0008955">
    <property type="term" value="F:peptidoglycan glycosyltransferase activity"/>
    <property type="evidence" value="ECO:0007669"/>
    <property type="project" value="RHEA"/>
</dbReference>
<dbReference type="GO" id="GO:0051301">
    <property type="term" value="P:cell division"/>
    <property type="evidence" value="ECO:0007669"/>
    <property type="project" value="UniProtKB-KW"/>
</dbReference>
<dbReference type="GO" id="GO:0071555">
    <property type="term" value="P:cell wall organization"/>
    <property type="evidence" value="ECO:0007669"/>
    <property type="project" value="UniProtKB-KW"/>
</dbReference>
<dbReference type="GO" id="GO:0009252">
    <property type="term" value="P:peptidoglycan biosynthetic process"/>
    <property type="evidence" value="ECO:0007669"/>
    <property type="project" value="UniProtKB-UniPathway"/>
</dbReference>
<dbReference type="GO" id="GO:0008360">
    <property type="term" value="P:regulation of cell shape"/>
    <property type="evidence" value="ECO:0007669"/>
    <property type="project" value="UniProtKB-KW"/>
</dbReference>
<dbReference type="HAMAP" id="MF_00913">
    <property type="entry name" value="PGT_FtsW_proteobact"/>
    <property type="match status" value="1"/>
</dbReference>
<dbReference type="InterPro" id="IPR018365">
    <property type="entry name" value="Cell_cycle_FtsW-rel_CS"/>
</dbReference>
<dbReference type="InterPro" id="IPR013437">
    <property type="entry name" value="FtsW"/>
</dbReference>
<dbReference type="InterPro" id="IPR001182">
    <property type="entry name" value="FtsW/RodA"/>
</dbReference>
<dbReference type="NCBIfam" id="TIGR02614">
    <property type="entry name" value="ftsW"/>
    <property type="match status" value="1"/>
</dbReference>
<dbReference type="PANTHER" id="PTHR30474">
    <property type="entry name" value="CELL CYCLE PROTEIN"/>
    <property type="match status" value="1"/>
</dbReference>
<dbReference type="PANTHER" id="PTHR30474:SF2">
    <property type="entry name" value="PEPTIDOGLYCAN GLYCOSYLTRANSFERASE FTSW-RELATED"/>
    <property type="match status" value="1"/>
</dbReference>
<dbReference type="Pfam" id="PF01098">
    <property type="entry name" value="FTSW_RODA_SPOVE"/>
    <property type="match status" value="1"/>
</dbReference>
<dbReference type="PROSITE" id="PS00428">
    <property type="entry name" value="FTSW_RODA_SPOVE"/>
    <property type="match status" value="1"/>
</dbReference>
<gene>
    <name evidence="1" type="primary">ftsW</name>
    <name type="ordered locus">KN400_3009</name>
</gene>
<feature type="chain" id="PRO_0000415186" description="Probable peptidoglycan glycosyltransferase FtsW">
    <location>
        <begin position="1"/>
        <end position="373"/>
    </location>
</feature>
<feature type="transmembrane region" description="Helical" evidence="1">
    <location>
        <begin position="15"/>
        <end position="35"/>
    </location>
</feature>
<feature type="transmembrane region" description="Helical" evidence="1">
    <location>
        <begin position="48"/>
        <end position="68"/>
    </location>
</feature>
<feature type="transmembrane region" description="Helical" evidence="1">
    <location>
        <begin position="80"/>
        <end position="100"/>
    </location>
</feature>
<feature type="transmembrane region" description="Helical" evidence="1">
    <location>
        <begin position="144"/>
        <end position="164"/>
    </location>
</feature>
<feature type="transmembrane region" description="Helical" evidence="1">
    <location>
        <begin position="168"/>
        <end position="188"/>
    </location>
</feature>
<feature type="transmembrane region" description="Helical" evidence="1">
    <location>
        <begin position="192"/>
        <end position="212"/>
    </location>
</feature>
<feature type="transmembrane region" description="Helical" evidence="1">
    <location>
        <begin position="278"/>
        <end position="298"/>
    </location>
</feature>
<feature type="transmembrane region" description="Helical" evidence="1">
    <location>
        <begin position="311"/>
        <end position="331"/>
    </location>
</feature>
<feature type="transmembrane region" description="Helical" evidence="1">
    <location>
        <begin position="342"/>
        <end position="362"/>
    </location>
</feature>
<name>FTSW_GEOSK</name>
<organism>
    <name type="scientific">Geobacter sulfurreducens (strain DL-1 / KN400)</name>
    <dbReference type="NCBI Taxonomy" id="663917"/>
    <lineage>
        <taxon>Bacteria</taxon>
        <taxon>Pseudomonadati</taxon>
        <taxon>Thermodesulfobacteriota</taxon>
        <taxon>Desulfuromonadia</taxon>
        <taxon>Geobacterales</taxon>
        <taxon>Geobacteraceae</taxon>
        <taxon>Geobacter</taxon>
    </lineage>
</organism>
<reference key="1">
    <citation type="journal article" date="2010" name="PLoS ONE">
        <title>De Novo assembly of the complete genome of an enhanced electricity-producing variant of Geobacter sulfurreducens using only short reads.</title>
        <authorList>
            <person name="Nagarajan H."/>
            <person name="Butler J.E."/>
            <person name="Klimes A."/>
            <person name="Qiu Y."/>
            <person name="Zengler K."/>
            <person name="Ward J."/>
            <person name="Young N.D."/>
            <person name="Methe B.A."/>
            <person name="Palsson B.O."/>
            <person name="Lovley D.R."/>
            <person name="Barrett C.L."/>
        </authorList>
    </citation>
    <scope>NUCLEOTIDE SEQUENCE [LARGE SCALE GENOMIC DNA]</scope>
    <source>
        <strain>DL-1 / KN400</strain>
    </source>
</reference>
<accession>D7AEL2</accession>
<keyword id="KW-0131">Cell cycle</keyword>
<keyword id="KW-0132">Cell division</keyword>
<keyword id="KW-0997">Cell inner membrane</keyword>
<keyword id="KW-1003">Cell membrane</keyword>
<keyword id="KW-0133">Cell shape</keyword>
<keyword id="KW-0961">Cell wall biogenesis/degradation</keyword>
<keyword id="KW-0328">Glycosyltransferase</keyword>
<keyword id="KW-0472">Membrane</keyword>
<keyword id="KW-0573">Peptidoglycan synthesis</keyword>
<keyword id="KW-0808">Transferase</keyword>
<keyword id="KW-0812">Transmembrane</keyword>
<keyword id="KW-1133">Transmembrane helix</keyword>
<proteinExistence type="inferred from homology"/>
<comment type="function">
    <text evidence="1">Peptidoglycan polymerase that is essential for cell division.</text>
</comment>
<comment type="catalytic activity">
    <reaction evidence="1">
        <text>[GlcNAc-(1-&gt;4)-Mur2Ac(oyl-L-Ala-gamma-D-Glu-L-Lys-D-Ala-D-Ala)](n)-di-trans,octa-cis-undecaprenyl diphosphate + beta-D-GlcNAc-(1-&gt;4)-Mur2Ac(oyl-L-Ala-gamma-D-Glu-L-Lys-D-Ala-D-Ala)-di-trans,octa-cis-undecaprenyl diphosphate = [GlcNAc-(1-&gt;4)-Mur2Ac(oyl-L-Ala-gamma-D-Glu-L-Lys-D-Ala-D-Ala)](n+1)-di-trans,octa-cis-undecaprenyl diphosphate + di-trans,octa-cis-undecaprenyl diphosphate + H(+)</text>
        <dbReference type="Rhea" id="RHEA:23708"/>
        <dbReference type="Rhea" id="RHEA-COMP:9602"/>
        <dbReference type="Rhea" id="RHEA-COMP:9603"/>
        <dbReference type="ChEBI" id="CHEBI:15378"/>
        <dbReference type="ChEBI" id="CHEBI:58405"/>
        <dbReference type="ChEBI" id="CHEBI:60033"/>
        <dbReference type="ChEBI" id="CHEBI:78435"/>
        <dbReference type="EC" id="2.4.99.28"/>
    </reaction>
</comment>
<comment type="pathway">
    <text evidence="1">Cell wall biogenesis; peptidoglycan biosynthesis.</text>
</comment>
<comment type="subcellular location">
    <subcellularLocation>
        <location evidence="1">Cell inner membrane</location>
        <topology evidence="1">Multi-pass membrane protein</topology>
    </subcellularLocation>
    <text evidence="1">Localizes to the division septum.</text>
</comment>
<comment type="similarity">
    <text evidence="1">Belongs to the SEDS family. FtsW subfamily.</text>
</comment>
<protein>
    <recommendedName>
        <fullName evidence="1">Probable peptidoglycan glycosyltransferase FtsW</fullName>
        <shortName evidence="1">PGT</shortName>
        <ecNumber evidence="1">2.4.99.28</ecNumber>
    </recommendedName>
    <alternativeName>
        <fullName evidence="1">Cell division protein FtsW</fullName>
    </alternativeName>
    <alternativeName>
        <fullName evidence="1">Cell wall polymerase</fullName>
    </alternativeName>
    <alternativeName>
        <fullName evidence="1">Peptidoglycan polymerase</fullName>
        <shortName evidence="1">PG polymerase</shortName>
    </alternativeName>
</protein>